<organism>
    <name type="scientific">Azotobacter vinelandii (strain DJ / ATCC BAA-1303)</name>
    <dbReference type="NCBI Taxonomy" id="322710"/>
    <lineage>
        <taxon>Bacteria</taxon>
        <taxon>Pseudomonadati</taxon>
        <taxon>Pseudomonadota</taxon>
        <taxon>Gammaproteobacteria</taxon>
        <taxon>Pseudomonadales</taxon>
        <taxon>Pseudomonadaceae</taxon>
        <taxon>Azotobacter</taxon>
    </lineage>
</organism>
<evidence type="ECO:0000255" key="1">
    <source>
        <dbReference type="HAMAP-Rule" id="MF_01527"/>
    </source>
</evidence>
<accession>C1DM03</accession>
<dbReference type="EC" id="3.5.4.16" evidence="1"/>
<dbReference type="EMBL" id="CP001157">
    <property type="protein sequence ID" value="ACO79090.1"/>
    <property type="molecule type" value="Genomic_DNA"/>
</dbReference>
<dbReference type="RefSeq" id="WP_012701477.1">
    <property type="nucleotide sequence ID" value="NC_012560.1"/>
</dbReference>
<dbReference type="SMR" id="C1DM03"/>
<dbReference type="STRING" id="322710.Avin_29210"/>
<dbReference type="EnsemblBacteria" id="ACO79090">
    <property type="protein sequence ID" value="ACO79090"/>
    <property type="gene ID" value="Avin_29210"/>
</dbReference>
<dbReference type="GeneID" id="88186027"/>
<dbReference type="KEGG" id="avn:Avin_29210"/>
<dbReference type="eggNOG" id="COG1469">
    <property type="taxonomic scope" value="Bacteria"/>
</dbReference>
<dbReference type="HOGENOM" id="CLU_062816_0_0_6"/>
<dbReference type="OrthoDB" id="239637at2"/>
<dbReference type="UniPathway" id="UPA00848">
    <property type="reaction ID" value="UER00151"/>
</dbReference>
<dbReference type="Proteomes" id="UP000002424">
    <property type="component" value="Chromosome"/>
</dbReference>
<dbReference type="GO" id="GO:0003934">
    <property type="term" value="F:GTP cyclohydrolase I activity"/>
    <property type="evidence" value="ECO:0007669"/>
    <property type="project" value="UniProtKB-UniRule"/>
</dbReference>
<dbReference type="GO" id="GO:0046654">
    <property type="term" value="P:tetrahydrofolate biosynthetic process"/>
    <property type="evidence" value="ECO:0007669"/>
    <property type="project" value="UniProtKB-UniRule"/>
</dbReference>
<dbReference type="Gene3D" id="3.10.270.10">
    <property type="entry name" value="Urate Oxidase"/>
    <property type="match status" value="1"/>
</dbReference>
<dbReference type="HAMAP" id="MF_01527_B">
    <property type="entry name" value="GTP_cyclohydrol_B"/>
    <property type="match status" value="1"/>
</dbReference>
<dbReference type="InterPro" id="IPR022838">
    <property type="entry name" value="GTP_cyclohydrolase_FolE2"/>
</dbReference>
<dbReference type="InterPro" id="IPR003801">
    <property type="entry name" value="GTP_cyclohydrolase_FolE2/MptA"/>
</dbReference>
<dbReference type="NCBIfam" id="NF010200">
    <property type="entry name" value="PRK13674.1-1"/>
    <property type="match status" value="1"/>
</dbReference>
<dbReference type="PANTHER" id="PTHR36445">
    <property type="entry name" value="GTP CYCLOHYDROLASE MPTA"/>
    <property type="match status" value="1"/>
</dbReference>
<dbReference type="PANTHER" id="PTHR36445:SF1">
    <property type="entry name" value="GTP CYCLOHYDROLASE MPTA"/>
    <property type="match status" value="1"/>
</dbReference>
<dbReference type="Pfam" id="PF02649">
    <property type="entry name" value="GCHY-1"/>
    <property type="match status" value="1"/>
</dbReference>
<gene>
    <name evidence="1" type="primary">folE2</name>
    <name type="ordered locus">Avin_29210</name>
</gene>
<sequence length="298" mass="32517">MSIPLPDVALTELSATRAPLDWVGMDGIDVPILLDEPEFAYPVHARAEVQVDLPDPAIKGIHMSRLYRLLDGFAGRDRLNPASLAVLLREMVFSHADCNSTRARLTLAFSLLCRRPALLTQGLSGWKSYPVRLEAVWEAGRLSLDATLQIGYSSTCPCSAALTRQLIEQAFVERFSAAGQVEPAAVAAWLQRNATLATPHSQRSVAEVRVRIPEGATRLGLLALIERIETCLGTPVQTAVKRADEQAFARLNGQNLMYVEDAARKIRQAVAEGFSQFSVSVRHVESLHPHDAVASSSS</sequence>
<reference key="1">
    <citation type="journal article" date="2009" name="J. Bacteriol.">
        <title>Genome sequence of Azotobacter vinelandii, an obligate aerobe specialized to support diverse anaerobic metabolic processes.</title>
        <authorList>
            <person name="Setubal J.C."/>
            <person name="Dos Santos P."/>
            <person name="Goldman B.S."/>
            <person name="Ertesvaag H."/>
            <person name="Espin G."/>
            <person name="Rubio L.M."/>
            <person name="Valla S."/>
            <person name="Almeida N.F."/>
            <person name="Balasubramanian D."/>
            <person name="Cromes L."/>
            <person name="Curatti L."/>
            <person name="Du Z."/>
            <person name="Godsy E."/>
            <person name="Goodner B."/>
            <person name="Hellner-Burris K."/>
            <person name="Hernandez J.A."/>
            <person name="Houmiel K."/>
            <person name="Imperial J."/>
            <person name="Kennedy C."/>
            <person name="Larson T.J."/>
            <person name="Latreille P."/>
            <person name="Ligon L.S."/>
            <person name="Lu J."/>
            <person name="Maerk M."/>
            <person name="Miller N.M."/>
            <person name="Norton S."/>
            <person name="O'Carroll I.P."/>
            <person name="Paulsen I."/>
            <person name="Raulfs E.C."/>
            <person name="Roemer R."/>
            <person name="Rosser J."/>
            <person name="Segura D."/>
            <person name="Slater S."/>
            <person name="Stricklin S.L."/>
            <person name="Studholme D.J."/>
            <person name="Sun J."/>
            <person name="Viana C.J."/>
            <person name="Wallin E."/>
            <person name="Wang B."/>
            <person name="Wheeler C."/>
            <person name="Zhu H."/>
            <person name="Dean D.R."/>
            <person name="Dixon R."/>
            <person name="Wood D."/>
        </authorList>
    </citation>
    <scope>NUCLEOTIDE SEQUENCE [LARGE SCALE GENOMIC DNA]</scope>
    <source>
        <strain>DJ / ATCC BAA-1303</strain>
    </source>
</reference>
<protein>
    <recommendedName>
        <fullName evidence="1">GTP cyclohydrolase FolE2</fullName>
        <ecNumber evidence="1">3.5.4.16</ecNumber>
    </recommendedName>
</protein>
<keyword id="KW-0378">Hydrolase</keyword>
<feature type="chain" id="PRO_1000215385" description="GTP cyclohydrolase FolE2">
    <location>
        <begin position="1"/>
        <end position="298"/>
    </location>
</feature>
<feature type="site" description="May be catalytically important" evidence="1">
    <location>
        <position position="156"/>
    </location>
</feature>
<proteinExistence type="inferred from homology"/>
<name>GCH4_AZOVD</name>
<comment type="function">
    <text evidence="1">Converts GTP to 7,8-dihydroneopterin triphosphate.</text>
</comment>
<comment type="catalytic activity">
    <reaction evidence="1">
        <text>GTP + H2O = 7,8-dihydroneopterin 3'-triphosphate + formate + H(+)</text>
        <dbReference type="Rhea" id="RHEA:17473"/>
        <dbReference type="ChEBI" id="CHEBI:15377"/>
        <dbReference type="ChEBI" id="CHEBI:15378"/>
        <dbReference type="ChEBI" id="CHEBI:15740"/>
        <dbReference type="ChEBI" id="CHEBI:37565"/>
        <dbReference type="ChEBI" id="CHEBI:58462"/>
        <dbReference type="EC" id="3.5.4.16"/>
    </reaction>
</comment>
<comment type="pathway">
    <text evidence="1">Cofactor biosynthesis; 7,8-dihydroneopterin triphosphate biosynthesis; 7,8-dihydroneopterin triphosphate from GTP: step 1/1.</text>
</comment>
<comment type="similarity">
    <text evidence="1">Belongs to the GTP cyclohydrolase IV family.</text>
</comment>